<evidence type="ECO:0000250" key="1">
    <source>
        <dbReference type="UniProtKB" id="Q8L9J7"/>
    </source>
</evidence>
<evidence type="ECO:0000255" key="2"/>
<evidence type="ECO:0000305" key="3"/>
<gene>
    <name type="primary">SWEET3B</name>
    <name type="ordered locus">Os01g0220700</name>
    <name type="ordered locus">LOC_Os01g12130</name>
    <name type="ORF">OsJ_00913</name>
    <name type="ORF">P0483F08.29</name>
</gene>
<sequence length="252" mass="28173">MVSNTIRVAVGILGNAASMLLYAAPILTFRRVIKKGSVEEFSCVPYILALFNCLLYTWYGLPVVSSGWENSTVSSINGLGILLEIAFISIYTWFAPRERKKFVLRMVLPVLAFFALTAIFSSFLFHTHGLRKVFVGSIGLVASISMYSSPMVAAKQVITTKSVEFMPFYLSLFSFLSSALWMIYGLLGKDLFIASPNFIGCPMGILQLVLYCIYRKSHKEAEKLHDIDQENGLKVVTTHEKITGREPEAQRD</sequence>
<keyword id="KW-1003">Cell membrane</keyword>
<keyword id="KW-0325">Glycoprotein</keyword>
<keyword id="KW-0472">Membrane</keyword>
<keyword id="KW-1185">Reference proteome</keyword>
<keyword id="KW-0677">Repeat</keyword>
<keyword id="KW-0762">Sugar transport</keyword>
<keyword id="KW-0812">Transmembrane</keyword>
<keyword id="KW-1133">Transmembrane helix</keyword>
<keyword id="KW-0813">Transport</keyword>
<reference key="1">
    <citation type="journal article" date="2002" name="Nature">
        <title>The genome sequence and structure of rice chromosome 1.</title>
        <authorList>
            <person name="Sasaki T."/>
            <person name="Matsumoto T."/>
            <person name="Yamamoto K."/>
            <person name="Sakata K."/>
            <person name="Baba T."/>
            <person name="Katayose Y."/>
            <person name="Wu J."/>
            <person name="Niimura Y."/>
            <person name="Cheng Z."/>
            <person name="Nagamura Y."/>
            <person name="Antonio B.A."/>
            <person name="Kanamori H."/>
            <person name="Hosokawa S."/>
            <person name="Masukawa M."/>
            <person name="Arikawa K."/>
            <person name="Chiden Y."/>
            <person name="Hayashi M."/>
            <person name="Okamoto M."/>
            <person name="Ando T."/>
            <person name="Aoki H."/>
            <person name="Arita K."/>
            <person name="Hamada M."/>
            <person name="Harada C."/>
            <person name="Hijishita S."/>
            <person name="Honda M."/>
            <person name="Ichikawa Y."/>
            <person name="Idonuma A."/>
            <person name="Iijima M."/>
            <person name="Ikeda M."/>
            <person name="Ikeno M."/>
            <person name="Ito S."/>
            <person name="Ito T."/>
            <person name="Ito Y."/>
            <person name="Ito Y."/>
            <person name="Iwabuchi A."/>
            <person name="Kamiya K."/>
            <person name="Karasawa W."/>
            <person name="Katagiri S."/>
            <person name="Kikuta A."/>
            <person name="Kobayashi N."/>
            <person name="Kono I."/>
            <person name="Machita K."/>
            <person name="Maehara T."/>
            <person name="Mizuno H."/>
            <person name="Mizubayashi T."/>
            <person name="Mukai Y."/>
            <person name="Nagasaki H."/>
            <person name="Nakashima M."/>
            <person name="Nakama Y."/>
            <person name="Nakamichi Y."/>
            <person name="Nakamura M."/>
            <person name="Namiki N."/>
            <person name="Negishi M."/>
            <person name="Ohta I."/>
            <person name="Ono N."/>
            <person name="Saji S."/>
            <person name="Sakai K."/>
            <person name="Shibata M."/>
            <person name="Shimokawa T."/>
            <person name="Shomura A."/>
            <person name="Song J."/>
            <person name="Takazaki Y."/>
            <person name="Terasawa K."/>
            <person name="Tsuji K."/>
            <person name="Waki K."/>
            <person name="Yamagata H."/>
            <person name="Yamane H."/>
            <person name="Yoshiki S."/>
            <person name="Yoshihara R."/>
            <person name="Yukawa K."/>
            <person name="Zhong H."/>
            <person name="Iwama H."/>
            <person name="Endo T."/>
            <person name="Ito H."/>
            <person name="Hahn J.H."/>
            <person name="Kim H.-I."/>
            <person name="Eun M.-Y."/>
            <person name="Yano M."/>
            <person name="Jiang J."/>
            <person name="Gojobori T."/>
        </authorList>
    </citation>
    <scope>NUCLEOTIDE SEQUENCE [LARGE SCALE GENOMIC DNA]</scope>
    <source>
        <strain>cv. Nipponbare</strain>
    </source>
</reference>
<reference key="2">
    <citation type="journal article" date="2005" name="Nature">
        <title>The map-based sequence of the rice genome.</title>
        <authorList>
            <consortium name="International rice genome sequencing project (IRGSP)"/>
        </authorList>
    </citation>
    <scope>NUCLEOTIDE SEQUENCE [LARGE SCALE GENOMIC DNA]</scope>
    <source>
        <strain>cv. Nipponbare</strain>
    </source>
</reference>
<reference key="3">
    <citation type="journal article" date="2008" name="Nucleic Acids Res.">
        <title>The rice annotation project database (RAP-DB): 2008 update.</title>
        <authorList>
            <consortium name="The rice annotation project (RAP)"/>
        </authorList>
    </citation>
    <scope>GENOME REANNOTATION</scope>
    <source>
        <strain>cv. Nipponbare</strain>
    </source>
</reference>
<reference key="4">
    <citation type="journal article" date="2013" name="Rice">
        <title>Improvement of the Oryza sativa Nipponbare reference genome using next generation sequence and optical map data.</title>
        <authorList>
            <person name="Kawahara Y."/>
            <person name="de la Bastide M."/>
            <person name="Hamilton J.P."/>
            <person name="Kanamori H."/>
            <person name="McCombie W.R."/>
            <person name="Ouyang S."/>
            <person name="Schwartz D.C."/>
            <person name="Tanaka T."/>
            <person name="Wu J."/>
            <person name="Zhou S."/>
            <person name="Childs K.L."/>
            <person name="Davidson R.M."/>
            <person name="Lin H."/>
            <person name="Quesada-Ocampo L."/>
            <person name="Vaillancourt B."/>
            <person name="Sakai H."/>
            <person name="Lee S.S."/>
            <person name="Kim J."/>
            <person name="Numa H."/>
            <person name="Itoh T."/>
            <person name="Buell C.R."/>
            <person name="Matsumoto T."/>
        </authorList>
    </citation>
    <scope>GENOME REANNOTATION</scope>
    <source>
        <strain>cv. Nipponbare</strain>
    </source>
</reference>
<reference key="5">
    <citation type="journal article" date="2005" name="PLoS Biol.">
        <title>The genomes of Oryza sativa: a history of duplications.</title>
        <authorList>
            <person name="Yu J."/>
            <person name="Wang J."/>
            <person name="Lin W."/>
            <person name="Li S."/>
            <person name="Li H."/>
            <person name="Zhou J."/>
            <person name="Ni P."/>
            <person name="Dong W."/>
            <person name="Hu S."/>
            <person name="Zeng C."/>
            <person name="Zhang J."/>
            <person name="Zhang Y."/>
            <person name="Li R."/>
            <person name="Xu Z."/>
            <person name="Li S."/>
            <person name="Li X."/>
            <person name="Zheng H."/>
            <person name="Cong L."/>
            <person name="Lin L."/>
            <person name="Yin J."/>
            <person name="Geng J."/>
            <person name="Li G."/>
            <person name="Shi J."/>
            <person name="Liu J."/>
            <person name="Lv H."/>
            <person name="Li J."/>
            <person name="Wang J."/>
            <person name="Deng Y."/>
            <person name="Ran L."/>
            <person name="Shi X."/>
            <person name="Wang X."/>
            <person name="Wu Q."/>
            <person name="Li C."/>
            <person name="Ren X."/>
            <person name="Wang J."/>
            <person name="Wang X."/>
            <person name="Li D."/>
            <person name="Liu D."/>
            <person name="Zhang X."/>
            <person name="Ji Z."/>
            <person name="Zhao W."/>
            <person name="Sun Y."/>
            <person name="Zhang Z."/>
            <person name="Bao J."/>
            <person name="Han Y."/>
            <person name="Dong L."/>
            <person name="Ji J."/>
            <person name="Chen P."/>
            <person name="Wu S."/>
            <person name="Liu J."/>
            <person name="Xiao Y."/>
            <person name="Bu D."/>
            <person name="Tan J."/>
            <person name="Yang L."/>
            <person name="Ye C."/>
            <person name="Zhang J."/>
            <person name="Xu J."/>
            <person name="Zhou Y."/>
            <person name="Yu Y."/>
            <person name="Zhang B."/>
            <person name="Zhuang S."/>
            <person name="Wei H."/>
            <person name="Liu B."/>
            <person name="Lei M."/>
            <person name="Yu H."/>
            <person name="Li Y."/>
            <person name="Xu H."/>
            <person name="Wei S."/>
            <person name="He X."/>
            <person name="Fang L."/>
            <person name="Zhang Z."/>
            <person name="Zhang Y."/>
            <person name="Huang X."/>
            <person name="Su Z."/>
            <person name="Tong W."/>
            <person name="Li J."/>
            <person name="Tong Z."/>
            <person name="Li S."/>
            <person name="Ye J."/>
            <person name="Wang L."/>
            <person name="Fang L."/>
            <person name="Lei T."/>
            <person name="Chen C.-S."/>
            <person name="Chen H.-C."/>
            <person name="Xu Z."/>
            <person name="Li H."/>
            <person name="Huang H."/>
            <person name="Zhang F."/>
            <person name="Xu H."/>
            <person name="Li N."/>
            <person name="Zhao C."/>
            <person name="Li S."/>
            <person name="Dong L."/>
            <person name="Huang Y."/>
            <person name="Li L."/>
            <person name="Xi Y."/>
            <person name="Qi Q."/>
            <person name="Li W."/>
            <person name="Zhang B."/>
            <person name="Hu W."/>
            <person name="Zhang Y."/>
            <person name="Tian X."/>
            <person name="Jiao Y."/>
            <person name="Liang X."/>
            <person name="Jin J."/>
            <person name="Gao L."/>
            <person name="Zheng W."/>
            <person name="Hao B."/>
            <person name="Liu S.-M."/>
            <person name="Wang W."/>
            <person name="Yuan L."/>
            <person name="Cao M."/>
            <person name="McDermott J."/>
            <person name="Samudrala R."/>
            <person name="Wang J."/>
            <person name="Wong G.K.-S."/>
            <person name="Yang H."/>
        </authorList>
    </citation>
    <scope>NUCLEOTIDE SEQUENCE [LARGE SCALE GENOMIC DNA]</scope>
    <source>
        <strain>cv. Nipponbare</strain>
    </source>
</reference>
<reference key="6">
    <citation type="journal article" date="2010" name="Nature">
        <title>Sugar transporters for intercellular exchange and nutrition of pathogens.</title>
        <authorList>
            <person name="Chen L.-Q."/>
            <person name="Hou B.-H."/>
            <person name="Lalonde S."/>
            <person name="Takanaga H."/>
            <person name="Hartung M.L."/>
            <person name="Qu X.-Q."/>
            <person name="Guo W.-J."/>
            <person name="Kim J.-G."/>
            <person name="Underwood W."/>
            <person name="Chaudhuri B."/>
            <person name="Chermak D."/>
            <person name="Antony G."/>
            <person name="White F.F."/>
            <person name="Somerville S.C."/>
            <person name="Mudgett M.B."/>
            <person name="Frommer W.B."/>
        </authorList>
    </citation>
    <scope>GENE FAMILY</scope>
    <scope>NOMENCLATURE</scope>
</reference>
<accession>Q5NAZ9</accession>
<accession>B9EU48</accession>
<accession>Q0JPI6</accession>
<name>SWT3B_ORYSJ</name>
<organism>
    <name type="scientific">Oryza sativa subsp. japonica</name>
    <name type="common">Rice</name>
    <dbReference type="NCBI Taxonomy" id="39947"/>
    <lineage>
        <taxon>Eukaryota</taxon>
        <taxon>Viridiplantae</taxon>
        <taxon>Streptophyta</taxon>
        <taxon>Embryophyta</taxon>
        <taxon>Tracheophyta</taxon>
        <taxon>Spermatophyta</taxon>
        <taxon>Magnoliopsida</taxon>
        <taxon>Liliopsida</taxon>
        <taxon>Poales</taxon>
        <taxon>Poaceae</taxon>
        <taxon>BOP clade</taxon>
        <taxon>Oryzoideae</taxon>
        <taxon>Oryzeae</taxon>
        <taxon>Oryzinae</taxon>
        <taxon>Oryza</taxon>
        <taxon>Oryza sativa</taxon>
    </lineage>
</organism>
<comment type="function">
    <text evidence="1">Mediates both low-affinity uptake and efflux of sugar across the plasma membrane.</text>
</comment>
<comment type="subunit">
    <text evidence="1">Forms homooligomers and/or heterooligomers.</text>
</comment>
<comment type="subcellular location">
    <subcellularLocation>
        <location evidence="1">Cell membrane</location>
        <topology evidence="1">Multi-pass membrane protein</topology>
    </subcellularLocation>
</comment>
<comment type="similarity">
    <text evidence="3">Belongs to the SWEET sugar transporter family.</text>
</comment>
<comment type="sequence caution" evidence="3">
    <conflict type="erroneous gene model prediction">
        <sequence resource="EMBL-CDS" id="BAD81365"/>
    </conflict>
</comment>
<comment type="sequence caution" evidence="3">
    <conflict type="erroneous gene model prediction">
        <sequence resource="EMBL-CDS" id="BAF04342"/>
    </conflict>
</comment>
<comment type="sequence caution" evidence="3">
    <conflict type="erroneous gene model prediction">
        <sequence resource="EMBL-CDS" id="EEE54130"/>
    </conflict>
</comment>
<proteinExistence type="inferred from homology"/>
<feature type="chain" id="PRO_0000404123" description="Bidirectional sugar transporter SWEET3b">
    <location>
        <begin position="1"/>
        <end position="252"/>
    </location>
</feature>
<feature type="topological domain" description="Extracellular" evidence="2">
    <location>
        <begin position="1"/>
        <end position="8"/>
    </location>
</feature>
<feature type="transmembrane region" description="Helical; Name=1" evidence="2">
    <location>
        <begin position="9"/>
        <end position="29"/>
    </location>
</feature>
<feature type="topological domain" description="Cytoplasmic" evidence="2">
    <location>
        <begin position="30"/>
        <end position="43"/>
    </location>
</feature>
<feature type="transmembrane region" description="Helical; Name=2" evidence="2">
    <location>
        <begin position="44"/>
        <end position="64"/>
    </location>
</feature>
<feature type="topological domain" description="Extracellular" evidence="2">
    <location>
        <begin position="65"/>
        <end position="75"/>
    </location>
</feature>
<feature type="transmembrane region" description="Helical; Name=3" evidence="2">
    <location>
        <begin position="76"/>
        <end position="96"/>
    </location>
</feature>
<feature type="topological domain" description="Cytoplasmic" evidence="2">
    <location>
        <begin position="97"/>
        <end position="105"/>
    </location>
</feature>
<feature type="transmembrane region" description="Helical; Name=4" evidence="2">
    <location>
        <begin position="106"/>
        <end position="126"/>
    </location>
</feature>
<feature type="topological domain" description="Extracellular" evidence="2">
    <location>
        <begin position="127"/>
        <end position="132"/>
    </location>
</feature>
<feature type="transmembrane region" description="Helical; Name=5" evidence="2">
    <location>
        <begin position="133"/>
        <end position="153"/>
    </location>
</feature>
<feature type="topological domain" description="Cytoplasmic" evidence="2">
    <location>
        <begin position="154"/>
        <end position="167"/>
    </location>
</feature>
<feature type="transmembrane region" description="Helical; Name=6" evidence="2">
    <location>
        <begin position="168"/>
        <end position="188"/>
    </location>
</feature>
<feature type="topological domain" description="Extracellular" evidence="2">
    <location>
        <begin position="189"/>
        <end position="190"/>
    </location>
</feature>
<feature type="transmembrane region" description="Helical; Name=7" evidence="2">
    <location>
        <begin position="191"/>
        <end position="211"/>
    </location>
</feature>
<feature type="topological domain" description="Cytoplasmic" evidence="2">
    <location>
        <begin position="212"/>
        <end position="252"/>
    </location>
</feature>
<feature type="domain" description="MtN3/slv 1">
    <location>
        <begin position="10"/>
        <end position="98"/>
    </location>
</feature>
<feature type="domain" description="MtN3/slv 2">
    <location>
        <begin position="134"/>
        <end position="219"/>
    </location>
</feature>
<feature type="glycosylation site" description="N-linked (GlcNAc...) asparagine" evidence="2">
    <location>
        <position position="70"/>
    </location>
</feature>
<dbReference type="EMBL" id="AP002094">
    <property type="protein sequence ID" value="BAD81365.1"/>
    <property type="status" value="ALT_SEQ"/>
    <property type="molecule type" value="Genomic_DNA"/>
</dbReference>
<dbReference type="EMBL" id="AP008207">
    <property type="protein sequence ID" value="BAF04342.2"/>
    <property type="status" value="ALT_SEQ"/>
    <property type="molecule type" value="Genomic_DNA"/>
</dbReference>
<dbReference type="EMBL" id="AP014957">
    <property type="status" value="NOT_ANNOTATED_CDS"/>
    <property type="molecule type" value="Genomic_DNA"/>
</dbReference>
<dbReference type="EMBL" id="CM000138">
    <property type="protein sequence ID" value="EEE54130.1"/>
    <property type="status" value="ALT_SEQ"/>
    <property type="molecule type" value="Genomic_DNA"/>
</dbReference>
<dbReference type="SMR" id="Q5NAZ9"/>
<dbReference type="FunCoup" id="Q5NAZ9">
    <property type="interactions" value="315"/>
</dbReference>
<dbReference type="TCDB" id="2.A.123.1.29">
    <property type="family name" value="the sweet, pq-loop, saliva, mtn3 (sweet) family"/>
</dbReference>
<dbReference type="GlyCosmos" id="Q5NAZ9">
    <property type="glycosylation" value="1 site, No reported glycans"/>
</dbReference>
<dbReference type="PaxDb" id="39947-Q5NAZ9"/>
<dbReference type="GeneID" id="4324648"/>
<dbReference type="KEGG" id="dosa:Os01g0220700"/>
<dbReference type="KEGG" id="osa:4324648"/>
<dbReference type="eggNOG" id="KOG1623">
    <property type="taxonomic scope" value="Eukaryota"/>
</dbReference>
<dbReference type="InParanoid" id="Q5NAZ9"/>
<dbReference type="OrthoDB" id="409725at2759"/>
<dbReference type="Proteomes" id="UP000000763">
    <property type="component" value="Chromosome 1"/>
</dbReference>
<dbReference type="Proteomes" id="UP000007752">
    <property type="component" value="Chromosome 1"/>
</dbReference>
<dbReference type="Proteomes" id="UP000059680">
    <property type="component" value="Chromosome 1"/>
</dbReference>
<dbReference type="GO" id="GO:0016020">
    <property type="term" value="C:membrane"/>
    <property type="evidence" value="ECO:0000318"/>
    <property type="project" value="GO_Central"/>
</dbReference>
<dbReference type="GO" id="GO:0005886">
    <property type="term" value="C:plasma membrane"/>
    <property type="evidence" value="ECO:0000250"/>
    <property type="project" value="UniProtKB"/>
</dbReference>
<dbReference type="GO" id="GO:0051119">
    <property type="term" value="F:sugar transmembrane transporter activity"/>
    <property type="evidence" value="ECO:0000250"/>
    <property type="project" value="UniProtKB"/>
</dbReference>
<dbReference type="GO" id="GO:0008643">
    <property type="term" value="P:carbohydrate transport"/>
    <property type="evidence" value="ECO:0000318"/>
    <property type="project" value="GO_Central"/>
</dbReference>
<dbReference type="FunFam" id="1.20.1280.290:FF:000001">
    <property type="entry name" value="Bidirectional sugar transporter SWEET"/>
    <property type="match status" value="1"/>
</dbReference>
<dbReference type="FunFam" id="1.20.1280.290:FF:000002">
    <property type="entry name" value="Bidirectional sugar transporter SWEET"/>
    <property type="match status" value="1"/>
</dbReference>
<dbReference type="Gene3D" id="1.20.1280.290">
    <property type="match status" value="2"/>
</dbReference>
<dbReference type="InterPro" id="IPR047664">
    <property type="entry name" value="SWEET"/>
</dbReference>
<dbReference type="InterPro" id="IPR004316">
    <property type="entry name" value="SWEET_rpt"/>
</dbReference>
<dbReference type="PANTHER" id="PTHR10791:SF28">
    <property type="entry name" value="BIDIRECTIONAL SUGAR TRANSPORTER SWEET3"/>
    <property type="match status" value="1"/>
</dbReference>
<dbReference type="PANTHER" id="PTHR10791">
    <property type="entry name" value="RAG1-ACTIVATING PROTEIN 1"/>
    <property type="match status" value="1"/>
</dbReference>
<dbReference type="Pfam" id="PF03083">
    <property type="entry name" value="MtN3_slv"/>
    <property type="match status" value="2"/>
</dbReference>
<protein>
    <recommendedName>
        <fullName>Bidirectional sugar transporter SWEET3b</fullName>
        <shortName>OsSWEET3b</shortName>
    </recommendedName>
</protein>